<evidence type="ECO:0000255" key="1">
    <source>
        <dbReference type="HAMAP-Rule" id="MF_00082"/>
    </source>
</evidence>
<organism>
    <name type="scientific">Acinetobacter baumannii (strain SDF)</name>
    <dbReference type="NCBI Taxonomy" id="509170"/>
    <lineage>
        <taxon>Bacteria</taxon>
        <taxon>Pseudomonadati</taxon>
        <taxon>Pseudomonadota</taxon>
        <taxon>Gammaproteobacteria</taxon>
        <taxon>Moraxellales</taxon>
        <taxon>Moraxellaceae</taxon>
        <taxon>Acinetobacter</taxon>
        <taxon>Acinetobacter calcoaceticus/baumannii complex</taxon>
    </lineage>
</organism>
<keyword id="KW-0028">Amino-acid biosynthesis</keyword>
<keyword id="KW-0055">Arginine biosynthesis</keyword>
<keyword id="KW-0067">ATP-binding</keyword>
<keyword id="KW-0963">Cytoplasm</keyword>
<keyword id="KW-0418">Kinase</keyword>
<keyword id="KW-0547">Nucleotide-binding</keyword>
<keyword id="KW-0808">Transferase</keyword>
<name>ARGB_ACIBS</name>
<proteinExistence type="inferred from homology"/>
<accession>B0VTE3</accession>
<feature type="chain" id="PRO_1000092842" description="Acetylglutamate kinase">
    <location>
        <begin position="1"/>
        <end position="302"/>
    </location>
</feature>
<feature type="binding site" evidence="1">
    <location>
        <begin position="68"/>
        <end position="69"/>
    </location>
    <ligand>
        <name>substrate</name>
    </ligand>
</feature>
<feature type="binding site" evidence="1">
    <location>
        <position position="90"/>
    </location>
    <ligand>
        <name>substrate</name>
    </ligand>
</feature>
<feature type="binding site" evidence="1">
    <location>
        <position position="194"/>
    </location>
    <ligand>
        <name>substrate</name>
    </ligand>
</feature>
<feature type="site" description="Transition state stabilizer" evidence="1">
    <location>
        <position position="33"/>
    </location>
</feature>
<feature type="site" description="Transition state stabilizer" evidence="1">
    <location>
        <position position="254"/>
    </location>
</feature>
<reference key="1">
    <citation type="journal article" date="2008" name="PLoS ONE">
        <title>Comparative analysis of Acinetobacters: three genomes for three lifestyles.</title>
        <authorList>
            <person name="Vallenet D."/>
            <person name="Nordmann P."/>
            <person name="Barbe V."/>
            <person name="Poirel L."/>
            <person name="Mangenot S."/>
            <person name="Bataille E."/>
            <person name="Dossat C."/>
            <person name="Gas S."/>
            <person name="Kreimeyer A."/>
            <person name="Lenoble P."/>
            <person name="Oztas S."/>
            <person name="Poulain J."/>
            <person name="Segurens B."/>
            <person name="Robert C."/>
            <person name="Abergel C."/>
            <person name="Claverie J.-M."/>
            <person name="Raoult D."/>
            <person name="Medigue C."/>
            <person name="Weissenbach J."/>
            <person name="Cruveiller S."/>
        </authorList>
    </citation>
    <scope>NUCLEOTIDE SEQUENCE [LARGE SCALE GENOMIC DNA]</scope>
    <source>
        <strain>SDF</strain>
    </source>
</reference>
<comment type="function">
    <text evidence="1">Catalyzes the ATP-dependent phosphorylation of N-acetyl-L-glutamate.</text>
</comment>
<comment type="catalytic activity">
    <reaction evidence="1">
        <text>N-acetyl-L-glutamate + ATP = N-acetyl-L-glutamyl 5-phosphate + ADP</text>
        <dbReference type="Rhea" id="RHEA:14629"/>
        <dbReference type="ChEBI" id="CHEBI:30616"/>
        <dbReference type="ChEBI" id="CHEBI:44337"/>
        <dbReference type="ChEBI" id="CHEBI:57936"/>
        <dbReference type="ChEBI" id="CHEBI:456216"/>
        <dbReference type="EC" id="2.7.2.8"/>
    </reaction>
</comment>
<comment type="pathway">
    <text evidence="1">Amino-acid biosynthesis; L-arginine biosynthesis; N(2)-acetyl-L-ornithine from L-glutamate: step 2/4.</text>
</comment>
<comment type="subcellular location">
    <subcellularLocation>
        <location evidence="1">Cytoplasm</location>
    </subcellularLocation>
</comment>
<comment type="similarity">
    <text evidence="1">Belongs to the acetylglutamate kinase family. ArgB subfamily.</text>
</comment>
<sequence>MPQDQHLGVDKAKILIEALPYIQRFSGKTLVVKYGGNAMTDPELESSFARDIVLLKTVGLNPIVVHGGGPQVDSFLKQLGRESDRIDGMRVTDEATMEVVEMVLGGSVNKSIVNLINKHGGRAIGLTGQDGNLLRARKLLMEKQEEDGSIKHIDLGMVGEVTGVKTDVLEMFTQSDFIPVIAPLGVDEKGNTYNINADLVAGKVAEALGAEKLILLTNISGVLDENKNLLTGLTTQEVDRLIETGVIYGGMIPKVGCALDAVKGGVVSAHIVDGRVPHATLLEIFTDHGVGTLISNRTQTTH</sequence>
<dbReference type="EC" id="2.7.2.8" evidence="1"/>
<dbReference type="EMBL" id="CU468230">
    <property type="protein sequence ID" value="CAP01858.1"/>
    <property type="molecule type" value="Genomic_DNA"/>
</dbReference>
<dbReference type="SMR" id="B0VTE3"/>
<dbReference type="KEGG" id="abm:ABSDF2548"/>
<dbReference type="HOGENOM" id="CLU_053680_0_0_6"/>
<dbReference type="UniPathway" id="UPA00068">
    <property type="reaction ID" value="UER00107"/>
</dbReference>
<dbReference type="Proteomes" id="UP000001741">
    <property type="component" value="Chromosome"/>
</dbReference>
<dbReference type="GO" id="GO:0005737">
    <property type="term" value="C:cytoplasm"/>
    <property type="evidence" value="ECO:0007669"/>
    <property type="project" value="UniProtKB-SubCell"/>
</dbReference>
<dbReference type="GO" id="GO:0003991">
    <property type="term" value="F:acetylglutamate kinase activity"/>
    <property type="evidence" value="ECO:0007669"/>
    <property type="project" value="UniProtKB-UniRule"/>
</dbReference>
<dbReference type="GO" id="GO:0005524">
    <property type="term" value="F:ATP binding"/>
    <property type="evidence" value="ECO:0007669"/>
    <property type="project" value="UniProtKB-UniRule"/>
</dbReference>
<dbReference type="GO" id="GO:0042450">
    <property type="term" value="P:arginine biosynthetic process via ornithine"/>
    <property type="evidence" value="ECO:0007669"/>
    <property type="project" value="UniProtKB-UniRule"/>
</dbReference>
<dbReference type="GO" id="GO:0006526">
    <property type="term" value="P:L-arginine biosynthetic process"/>
    <property type="evidence" value="ECO:0007669"/>
    <property type="project" value="UniProtKB-UniPathway"/>
</dbReference>
<dbReference type="CDD" id="cd04250">
    <property type="entry name" value="AAK_NAGK-C"/>
    <property type="match status" value="1"/>
</dbReference>
<dbReference type="FunFam" id="3.40.1160.10:FF:000004">
    <property type="entry name" value="Acetylglutamate kinase"/>
    <property type="match status" value="1"/>
</dbReference>
<dbReference type="Gene3D" id="3.40.1160.10">
    <property type="entry name" value="Acetylglutamate kinase-like"/>
    <property type="match status" value="1"/>
</dbReference>
<dbReference type="HAMAP" id="MF_00082">
    <property type="entry name" value="ArgB"/>
    <property type="match status" value="1"/>
</dbReference>
<dbReference type="InterPro" id="IPR036393">
    <property type="entry name" value="AceGlu_kinase-like_sf"/>
</dbReference>
<dbReference type="InterPro" id="IPR004662">
    <property type="entry name" value="AcgluKinase_fam"/>
</dbReference>
<dbReference type="InterPro" id="IPR037528">
    <property type="entry name" value="ArgB"/>
</dbReference>
<dbReference type="InterPro" id="IPR001048">
    <property type="entry name" value="Asp/Glu/Uridylate_kinase"/>
</dbReference>
<dbReference type="InterPro" id="IPR041727">
    <property type="entry name" value="NAGK-C"/>
</dbReference>
<dbReference type="NCBIfam" id="TIGR00761">
    <property type="entry name" value="argB"/>
    <property type="match status" value="1"/>
</dbReference>
<dbReference type="PANTHER" id="PTHR23342">
    <property type="entry name" value="N-ACETYLGLUTAMATE SYNTHASE"/>
    <property type="match status" value="1"/>
</dbReference>
<dbReference type="PANTHER" id="PTHR23342:SF0">
    <property type="entry name" value="N-ACETYLGLUTAMATE SYNTHASE, MITOCHONDRIAL"/>
    <property type="match status" value="1"/>
</dbReference>
<dbReference type="Pfam" id="PF00696">
    <property type="entry name" value="AA_kinase"/>
    <property type="match status" value="1"/>
</dbReference>
<dbReference type="PIRSF" id="PIRSF000728">
    <property type="entry name" value="NAGK"/>
    <property type="match status" value="1"/>
</dbReference>
<dbReference type="SUPFAM" id="SSF53633">
    <property type="entry name" value="Carbamate kinase-like"/>
    <property type="match status" value="1"/>
</dbReference>
<protein>
    <recommendedName>
        <fullName evidence="1">Acetylglutamate kinase</fullName>
        <ecNumber evidence="1">2.7.2.8</ecNumber>
    </recommendedName>
    <alternativeName>
        <fullName evidence="1">N-acetyl-L-glutamate 5-phosphotransferase</fullName>
    </alternativeName>
    <alternativeName>
        <fullName evidence="1">NAG kinase</fullName>
        <shortName evidence="1">NAGK</shortName>
    </alternativeName>
</protein>
<gene>
    <name evidence="1" type="primary">argB</name>
    <name type="ordered locus">ABSDF2548</name>
</gene>